<name>CYMEC_MELDN</name>
<dbReference type="SMR" id="C0HKI6"/>
<dbReference type="GO" id="GO:0006952">
    <property type="term" value="P:defense response"/>
    <property type="evidence" value="ECO:0007669"/>
    <property type="project" value="UniProtKB-KW"/>
</dbReference>
<dbReference type="InterPro" id="IPR005535">
    <property type="entry name" value="Cyclotide"/>
</dbReference>
<dbReference type="InterPro" id="IPR036146">
    <property type="entry name" value="Cyclotide_sf"/>
</dbReference>
<dbReference type="Pfam" id="PF03784">
    <property type="entry name" value="Cyclotide"/>
    <property type="match status" value="1"/>
</dbReference>
<dbReference type="PIRSF" id="PIRSF037891">
    <property type="entry name" value="Cycloviolacin"/>
    <property type="match status" value="1"/>
</dbReference>
<dbReference type="SUPFAM" id="SSF57038">
    <property type="entry name" value="Cyclotides"/>
    <property type="match status" value="1"/>
</dbReference>
<dbReference type="PROSITE" id="PS51052">
    <property type="entry name" value="CYCLOTIDE"/>
    <property type="match status" value="1"/>
</dbReference>
<keyword id="KW-0903">Direct protein sequencing</keyword>
<keyword id="KW-1015">Disulfide bond</keyword>
<keyword id="KW-0611">Plant defense</keyword>
<accession>C0HKI6</accession>
<comment type="function">
    <text evidence="1">Probably participates in a plant defense mechanism.</text>
</comment>
<comment type="domain">
    <text evidence="4">The presence of a 'disulfide through disulfide knot' structurally defines this protein as a knottin.</text>
</comment>
<comment type="PTM">
    <text evidence="1">This is a cyclic peptide.</text>
</comment>
<comment type="similarity">
    <text evidence="1">Belongs to the cyclotide family.</text>
</comment>
<comment type="caution">
    <text evidence="1">This peptide is cyclic. The start position was chosen by similarity to Oak1 (kalata B1) for which the DNA sequence is known.</text>
</comment>
<sequence length="29" mass="3117">GKPICGETCFKGKCYTPGCTCSYPVCKKN</sequence>
<evidence type="ECO:0000255" key="1">
    <source>
        <dbReference type="PROSITE-ProRule" id="PRU00395"/>
    </source>
</evidence>
<evidence type="ECO:0000269" key="2">
    <source>
    </source>
</evidence>
<evidence type="ECO:0000303" key="3">
    <source>
    </source>
</evidence>
<evidence type="ECO:0000305" key="4"/>
<feature type="peptide" id="PRO_0000441364" description="Cyclotide mden-C" evidence="2">
    <location>
        <begin position="1"/>
        <end position="29"/>
    </location>
</feature>
<feature type="disulfide bond" evidence="1">
    <location>
        <begin position="5"/>
        <end position="19"/>
    </location>
</feature>
<feature type="disulfide bond" evidence="1">
    <location>
        <begin position="9"/>
        <end position="21"/>
    </location>
</feature>
<feature type="disulfide bond" evidence="1">
    <location>
        <begin position="14"/>
        <end position="26"/>
    </location>
</feature>
<feature type="cross-link" description="Cyclopeptide (Gly-Asn)" evidence="3">
    <location>
        <begin position="1"/>
        <end position="29"/>
    </location>
</feature>
<organism evidence="3">
    <name type="scientific">Melicytus dentatus</name>
    <name type="common">Tree violet</name>
    <dbReference type="NCBI Taxonomy" id="491106"/>
    <lineage>
        <taxon>Eukaryota</taxon>
        <taxon>Viridiplantae</taxon>
        <taxon>Streptophyta</taxon>
        <taxon>Embryophyta</taxon>
        <taxon>Tracheophyta</taxon>
        <taxon>Spermatophyta</taxon>
        <taxon>Magnoliopsida</taxon>
        <taxon>eudicotyledons</taxon>
        <taxon>Gunneridae</taxon>
        <taxon>Pentapetalae</taxon>
        <taxon>rosids</taxon>
        <taxon>fabids</taxon>
        <taxon>Malpighiales</taxon>
        <taxon>Violaceae</taxon>
        <taxon>Melicytus</taxon>
    </lineage>
</organism>
<reference evidence="4" key="1">
    <citation type="journal article" date="2017" name="J. Nat. Prod.">
        <title>Understanding the Diversity and Distribution of Cyclotides from Plants of Varied Genetic Origin.</title>
        <authorList>
            <person name="Ravipati A.S."/>
            <person name="Poth A.G."/>
            <person name="Troeira Henriques S."/>
            <person name="Bhandari M."/>
            <person name="Huang Y.H."/>
            <person name="Nino J."/>
            <person name="Colgrave M.L."/>
            <person name="Craik D.J."/>
        </authorList>
    </citation>
    <scope>PROTEIN SEQUENCE</scope>
</reference>
<proteinExistence type="evidence at protein level"/>
<protein>
    <recommendedName>
        <fullName evidence="3">Cyclotide mden-C</fullName>
    </recommendedName>
</protein>